<organism>
    <name type="scientific">Baumannia cicadellinicola subsp. Homalodisca coagulata</name>
    <dbReference type="NCBI Taxonomy" id="374463"/>
    <lineage>
        <taxon>Bacteria</taxon>
        <taxon>Pseudomonadati</taxon>
        <taxon>Pseudomonadota</taxon>
        <taxon>Gammaproteobacteria</taxon>
        <taxon>Candidatus Palibaumannia</taxon>
    </lineage>
</organism>
<sequence length="265" mass="28907">MNITTISHLRKYKQRQQKFAAITAYDAAFASLFEQNGIQVMLVGDSLGMTIQGNDSTLPVTLEDMIYHTRCVRRGAPYCLLIADLPFMCYATLYQAYDNAAALMRAGANIVKLEGGGCWVTKIVRCLTDRAVPVCCHLGLTPQSVNILGGYKIQGRDKDSADRILSESIALELAGAQMLVLECVPITLSERIADVLTIPVIGIGAGPVTDGQILVMQDILGITGNRIPSFAKNFLTDSRDIPTAIQLYVQEVETGKFPAVQHYFS</sequence>
<comment type="function">
    <text evidence="1">Catalyzes the reversible reaction in which hydroxymethyl group from 5,10-methylenetetrahydrofolate is transferred onto alpha-ketoisovalerate to form ketopantoate.</text>
</comment>
<comment type="catalytic activity">
    <reaction evidence="1">
        <text>3-methyl-2-oxobutanoate + (6R)-5,10-methylene-5,6,7,8-tetrahydrofolate + H2O = 2-dehydropantoate + (6S)-5,6,7,8-tetrahydrofolate</text>
        <dbReference type="Rhea" id="RHEA:11824"/>
        <dbReference type="ChEBI" id="CHEBI:11561"/>
        <dbReference type="ChEBI" id="CHEBI:11851"/>
        <dbReference type="ChEBI" id="CHEBI:15377"/>
        <dbReference type="ChEBI" id="CHEBI:15636"/>
        <dbReference type="ChEBI" id="CHEBI:57453"/>
        <dbReference type="EC" id="2.1.2.11"/>
    </reaction>
</comment>
<comment type="cofactor">
    <cofactor evidence="1">
        <name>Mg(2+)</name>
        <dbReference type="ChEBI" id="CHEBI:18420"/>
    </cofactor>
    <text evidence="1">Binds 1 Mg(2+) ion per subunit.</text>
</comment>
<comment type="pathway">
    <text evidence="1">Cofactor biosynthesis; (R)-pantothenate biosynthesis; (R)-pantoate from 3-methyl-2-oxobutanoate: step 1/2.</text>
</comment>
<comment type="subunit">
    <text evidence="1">Homodecamer; pentamer of dimers.</text>
</comment>
<comment type="subcellular location">
    <subcellularLocation>
        <location evidence="1">Cytoplasm</location>
    </subcellularLocation>
</comment>
<comment type="similarity">
    <text evidence="1">Belongs to the PanB family.</text>
</comment>
<name>PANB_BAUCH</name>
<gene>
    <name evidence="1" type="primary">panB</name>
    <name type="ordered locus">BCI_0230</name>
</gene>
<protein>
    <recommendedName>
        <fullName evidence="1">3-methyl-2-oxobutanoate hydroxymethyltransferase</fullName>
        <ecNumber evidence="1">2.1.2.11</ecNumber>
    </recommendedName>
    <alternativeName>
        <fullName evidence="1">Ketopantoate hydroxymethyltransferase</fullName>
        <shortName evidence="1">KPHMT</shortName>
    </alternativeName>
</protein>
<keyword id="KW-0963">Cytoplasm</keyword>
<keyword id="KW-0460">Magnesium</keyword>
<keyword id="KW-0479">Metal-binding</keyword>
<keyword id="KW-0566">Pantothenate biosynthesis</keyword>
<keyword id="KW-1185">Reference proteome</keyword>
<keyword id="KW-0808">Transferase</keyword>
<evidence type="ECO:0000255" key="1">
    <source>
        <dbReference type="HAMAP-Rule" id="MF_00156"/>
    </source>
</evidence>
<accession>Q1LTN1</accession>
<dbReference type="EC" id="2.1.2.11" evidence="1"/>
<dbReference type="EMBL" id="CP000238">
    <property type="protein sequence ID" value="ABF14057.1"/>
    <property type="molecule type" value="Genomic_DNA"/>
</dbReference>
<dbReference type="RefSeq" id="WP_011520416.1">
    <property type="nucleotide sequence ID" value="NC_007984.1"/>
</dbReference>
<dbReference type="SMR" id="Q1LTN1"/>
<dbReference type="STRING" id="374463.BCI_0230"/>
<dbReference type="KEGG" id="bci:BCI_0230"/>
<dbReference type="HOGENOM" id="CLU_036645_1_0_6"/>
<dbReference type="OrthoDB" id="9781789at2"/>
<dbReference type="UniPathway" id="UPA00028">
    <property type="reaction ID" value="UER00003"/>
</dbReference>
<dbReference type="Proteomes" id="UP000002427">
    <property type="component" value="Chromosome"/>
</dbReference>
<dbReference type="GO" id="GO:0005737">
    <property type="term" value="C:cytoplasm"/>
    <property type="evidence" value="ECO:0007669"/>
    <property type="project" value="UniProtKB-SubCell"/>
</dbReference>
<dbReference type="GO" id="GO:0003864">
    <property type="term" value="F:3-methyl-2-oxobutanoate hydroxymethyltransferase activity"/>
    <property type="evidence" value="ECO:0007669"/>
    <property type="project" value="UniProtKB-UniRule"/>
</dbReference>
<dbReference type="GO" id="GO:0000287">
    <property type="term" value="F:magnesium ion binding"/>
    <property type="evidence" value="ECO:0007669"/>
    <property type="project" value="TreeGrafter"/>
</dbReference>
<dbReference type="GO" id="GO:0015940">
    <property type="term" value="P:pantothenate biosynthetic process"/>
    <property type="evidence" value="ECO:0007669"/>
    <property type="project" value="UniProtKB-UniRule"/>
</dbReference>
<dbReference type="CDD" id="cd06557">
    <property type="entry name" value="KPHMT-like"/>
    <property type="match status" value="1"/>
</dbReference>
<dbReference type="FunFam" id="3.20.20.60:FF:000003">
    <property type="entry name" value="3-methyl-2-oxobutanoate hydroxymethyltransferase"/>
    <property type="match status" value="1"/>
</dbReference>
<dbReference type="Gene3D" id="3.20.20.60">
    <property type="entry name" value="Phosphoenolpyruvate-binding domains"/>
    <property type="match status" value="1"/>
</dbReference>
<dbReference type="HAMAP" id="MF_00156">
    <property type="entry name" value="PanB"/>
    <property type="match status" value="1"/>
</dbReference>
<dbReference type="InterPro" id="IPR003700">
    <property type="entry name" value="Pantoate_hydroxy_MeTrfase"/>
</dbReference>
<dbReference type="InterPro" id="IPR015813">
    <property type="entry name" value="Pyrv/PenolPyrv_kinase-like_dom"/>
</dbReference>
<dbReference type="InterPro" id="IPR040442">
    <property type="entry name" value="Pyrv_kinase-like_dom_sf"/>
</dbReference>
<dbReference type="NCBIfam" id="TIGR00222">
    <property type="entry name" value="panB"/>
    <property type="match status" value="1"/>
</dbReference>
<dbReference type="NCBIfam" id="NF001452">
    <property type="entry name" value="PRK00311.1"/>
    <property type="match status" value="1"/>
</dbReference>
<dbReference type="PANTHER" id="PTHR20881">
    <property type="entry name" value="3-METHYL-2-OXOBUTANOATE HYDROXYMETHYLTRANSFERASE"/>
    <property type="match status" value="1"/>
</dbReference>
<dbReference type="PANTHER" id="PTHR20881:SF0">
    <property type="entry name" value="3-METHYL-2-OXOBUTANOATE HYDROXYMETHYLTRANSFERASE"/>
    <property type="match status" value="1"/>
</dbReference>
<dbReference type="Pfam" id="PF02548">
    <property type="entry name" value="Pantoate_transf"/>
    <property type="match status" value="1"/>
</dbReference>
<dbReference type="PIRSF" id="PIRSF000388">
    <property type="entry name" value="Pantoate_hydroxy_MeTrfase"/>
    <property type="match status" value="1"/>
</dbReference>
<dbReference type="SUPFAM" id="SSF51621">
    <property type="entry name" value="Phosphoenolpyruvate/pyruvate domain"/>
    <property type="match status" value="1"/>
</dbReference>
<proteinExistence type="inferred from homology"/>
<feature type="chain" id="PRO_0000297224" description="3-methyl-2-oxobutanoate hydroxymethyltransferase">
    <location>
        <begin position="1"/>
        <end position="265"/>
    </location>
</feature>
<feature type="active site" description="Proton acceptor" evidence="1">
    <location>
        <position position="182"/>
    </location>
</feature>
<feature type="binding site" evidence="1">
    <location>
        <begin position="45"/>
        <end position="46"/>
    </location>
    <ligand>
        <name>3-methyl-2-oxobutanoate</name>
        <dbReference type="ChEBI" id="CHEBI:11851"/>
    </ligand>
</feature>
<feature type="binding site" evidence="1">
    <location>
        <position position="45"/>
    </location>
    <ligand>
        <name>Mg(2+)</name>
        <dbReference type="ChEBI" id="CHEBI:18420"/>
    </ligand>
</feature>
<feature type="binding site" evidence="1">
    <location>
        <position position="84"/>
    </location>
    <ligand>
        <name>3-methyl-2-oxobutanoate</name>
        <dbReference type="ChEBI" id="CHEBI:11851"/>
    </ligand>
</feature>
<feature type="binding site" evidence="1">
    <location>
        <position position="84"/>
    </location>
    <ligand>
        <name>Mg(2+)</name>
        <dbReference type="ChEBI" id="CHEBI:18420"/>
    </ligand>
</feature>
<feature type="binding site" evidence="1">
    <location>
        <position position="112"/>
    </location>
    <ligand>
        <name>3-methyl-2-oxobutanoate</name>
        <dbReference type="ChEBI" id="CHEBI:11851"/>
    </ligand>
</feature>
<feature type="binding site" evidence="1">
    <location>
        <position position="114"/>
    </location>
    <ligand>
        <name>Mg(2+)</name>
        <dbReference type="ChEBI" id="CHEBI:18420"/>
    </ligand>
</feature>
<reference key="1">
    <citation type="journal article" date="2006" name="PLoS Biol.">
        <title>Metabolic complementarity and genomics of the dual bacterial symbiosis of sharpshooters.</title>
        <authorList>
            <person name="Wu D."/>
            <person name="Daugherty S.C."/>
            <person name="Van Aken S.E."/>
            <person name="Pai G.H."/>
            <person name="Watkins K.L."/>
            <person name="Khouri H."/>
            <person name="Tallon L.J."/>
            <person name="Zaborsky J.M."/>
            <person name="Dunbar H.E."/>
            <person name="Tran P.L."/>
            <person name="Moran N.A."/>
            <person name="Eisen J.A."/>
        </authorList>
    </citation>
    <scope>NUCLEOTIDE SEQUENCE [LARGE SCALE GENOMIC DNA]</scope>
</reference>